<proteinExistence type="inferred from homology"/>
<dbReference type="EMBL" id="AL590447">
    <property type="protein sequence ID" value="CAD25718.1"/>
    <property type="molecule type" value="Genomic_DNA"/>
</dbReference>
<dbReference type="EMBL" id="AL590449">
    <property type="protein sequence ID" value="CAD25723.1"/>
    <property type="molecule type" value="Genomic_DNA"/>
</dbReference>
<dbReference type="RefSeq" id="NP_586114.1">
    <property type="nucleotide sequence ID" value="NM_001041736.1"/>
</dbReference>
<dbReference type="RefSeq" id="NP_586119.1">
    <property type="nucleotide sequence ID" value="NM_001041952.1"/>
</dbReference>
<dbReference type="GeneID" id="859548"/>
<dbReference type="GeneID" id="859765"/>
<dbReference type="KEGG" id="ecu:ECU07_1870"/>
<dbReference type="KEGG" id="ecu:ECU10_0030"/>
<dbReference type="VEuPathDB" id="MicrosporidiaDB:ECU07_1870"/>
<dbReference type="VEuPathDB" id="MicrosporidiaDB:ECU10_0030"/>
<dbReference type="HOGENOM" id="CLU_059413_0_0_1"/>
<dbReference type="InParanoid" id="Q8STJ1"/>
<dbReference type="OrthoDB" id="13013at6029"/>
<dbReference type="Proteomes" id="UP000000819">
    <property type="component" value="Chromosome VII"/>
</dbReference>
<dbReference type="Proteomes" id="UP000000819">
    <property type="component" value="Chromosome X"/>
</dbReference>
<dbReference type="InterPro" id="IPR019081">
    <property type="entry name" value="UPF0328"/>
</dbReference>
<dbReference type="Pfam" id="PF09591">
    <property type="entry name" value="DUF2463"/>
    <property type="match status" value="1"/>
</dbReference>
<protein>
    <recommendedName>
        <fullName>UPF0328 protein ECU07_1870/ECU10_0030</fullName>
    </recommendedName>
</protein>
<name>Y7I7_ENCCU</name>
<accession>Q8STJ1</accession>
<sequence>MNTTHVPEPHRTEQHTENQPHWKKILGIAPFVSIAFPAVMYFILTKDSFKDSPFLKFITVLLPYLHPPVLHLLLLHTNWRKTHKSKHTILYCLVNLLLLAFAVANILSIVALIVDKQKRTDDLLLHSIILPSFFIPPAYLLSTSCCLVPGQIGFTDTGINVIIDILILICPAISLVLVDEKSKYYPYSTAIPSILILVRLFREKCSPPKQSSPPIPTWRVAAFVFILVLAVLVYGLLGSGSIITLYDHFHPPKGADATSS</sequence>
<comment type="similarity">
    <text evidence="1">Belongs to the UPF0328 family.</text>
</comment>
<reference key="1">
    <citation type="journal article" date="2001" name="Nature">
        <title>Genome sequence and gene compaction of the eukaryote parasite Encephalitozoon cuniculi.</title>
        <authorList>
            <person name="Katinka M.D."/>
            <person name="Duprat S."/>
            <person name="Cornillot E."/>
            <person name="Metenier G."/>
            <person name="Thomarat F."/>
            <person name="Prensier G."/>
            <person name="Barbe V."/>
            <person name="Peyretaillade E."/>
            <person name="Brottier P."/>
            <person name="Wincker P."/>
            <person name="Delbac F."/>
            <person name="El Alaoui H."/>
            <person name="Peyret P."/>
            <person name="Saurin W."/>
            <person name="Gouy M."/>
            <person name="Weissenbach J."/>
            <person name="Vivares C.P."/>
        </authorList>
    </citation>
    <scope>NUCLEOTIDE SEQUENCE [LARGE SCALE GENOMIC DNA]</scope>
    <source>
        <strain>GB-M1</strain>
    </source>
</reference>
<feature type="chain" id="PRO_0000223136" description="UPF0328 protein ECU07_1870/ECU10_0030">
    <location>
        <begin position="1"/>
        <end position="260"/>
    </location>
</feature>
<keyword id="KW-1185">Reference proteome</keyword>
<evidence type="ECO:0000305" key="1"/>
<gene>
    <name type="ordered locus">ECU07_1870</name>
</gene>
<gene>
    <name type="ordered locus">ECU10_0030</name>
</gene>
<organism>
    <name type="scientific">Encephalitozoon cuniculi (strain GB-M1)</name>
    <name type="common">Microsporidian parasite</name>
    <dbReference type="NCBI Taxonomy" id="284813"/>
    <lineage>
        <taxon>Eukaryota</taxon>
        <taxon>Fungi</taxon>
        <taxon>Fungi incertae sedis</taxon>
        <taxon>Microsporidia</taxon>
        <taxon>Unikaryonidae</taxon>
        <taxon>Encephalitozoon</taxon>
    </lineage>
</organism>